<keyword id="KW-0963">Cytoplasm</keyword>
<keyword id="KW-0378">Hydrolase</keyword>
<keyword id="KW-0520">NAD</keyword>
<keyword id="KW-0554">One-carbon metabolism</keyword>
<proteinExistence type="inferred from homology"/>
<organism>
    <name type="scientific">Nitratidesulfovibrio vulgaris (strain DP4)</name>
    <name type="common">Desulfovibrio vulgaris</name>
    <dbReference type="NCBI Taxonomy" id="391774"/>
    <lineage>
        <taxon>Bacteria</taxon>
        <taxon>Pseudomonadati</taxon>
        <taxon>Thermodesulfobacteriota</taxon>
        <taxon>Desulfovibrionia</taxon>
        <taxon>Desulfovibrionales</taxon>
        <taxon>Desulfovibrionaceae</taxon>
        <taxon>Nitratidesulfovibrio</taxon>
    </lineage>
</organism>
<evidence type="ECO:0000255" key="1">
    <source>
        <dbReference type="HAMAP-Rule" id="MF_00563"/>
    </source>
</evidence>
<sequence length="479" mass="52897">MTDAKRAQKLDLSLDHKVADMSLADYGRKDLQLSEREMPGLMELIRKYGGTKPLKGLKVTGSLHMTIQTAMLIRTLYELGADIRWASCNIFSTQDHAAAAIAASGMAKVFAWKGETLEDYWWCTEMALTWPDGSGPDLLVDDGGDATLFIHKGVEVENDPSLLKKAYDNKEFQIIMDRLALAYEQDPGRWQRVAAKVRGVSEETTTGVHRLYQLEQEGKLLFPAINVNDAVTKSKFDNLYGCRESLADGIKRATDVMVAGKVVVVAGYGDVGKGCAQSMRGFGARVLVTEIDPICALQAAMEGYEVTTMEEAVRTGDIFVTATGNCNVITGAHMEAMKDEAIVCNIGHFDNEIDMHYLENTEGCVCLNIKPQVDKWTLRSGRSIIVLAEGRLVNLGCATGHPSFVMSASFTNQTLAQIELATNPDLERKVYTLPKKLDEEVARLHLDRLGVKLTRLSKDQADYIGVSPEGPFKPDHYRY</sequence>
<dbReference type="EC" id="3.13.2.1" evidence="1"/>
<dbReference type="EMBL" id="CP000527">
    <property type="protein sequence ID" value="ABM29363.1"/>
    <property type="molecule type" value="Genomic_DNA"/>
</dbReference>
<dbReference type="RefSeq" id="WP_010937910.1">
    <property type="nucleotide sequence ID" value="NC_008751.1"/>
</dbReference>
<dbReference type="SMR" id="A1VFZ7"/>
<dbReference type="KEGG" id="dvl:Dvul_2347"/>
<dbReference type="HOGENOM" id="CLU_025194_2_0_7"/>
<dbReference type="UniPathway" id="UPA00314">
    <property type="reaction ID" value="UER00076"/>
</dbReference>
<dbReference type="Proteomes" id="UP000009173">
    <property type="component" value="Chromosome"/>
</dbReference>
<dbReference type="GO" id="GO:0005829">
    <property type="term" value="C:cytosol"/>
    <property type="evidence" value="ECO:0007669"/>
    <property type="project" value="TreeGrafter"/>
</dbReference>
<dbReference type="GO" id="GO:0004013">
    <property type="term" value="F:adenosylhomocysteinase activity"/>
    <property type="evidence" value="ECO:0007669"/>
    <property type="project" value="UniProtKB-UniRule"/>
</dbReference>
<dbReference type="GO" id="GO:0071269">
    <property type="term" value="P:L-homocysteine biosynthetic process"/>
    <property type="evidence" value="ECO:0007669"/>
    <property type="project" value="UniProtKB-UniRule"/>
</dbReference>
<dbReference type="GO" id="GO:0006730">
    <property type="term" value="P:one-carbon metabolic process"/>
    <property type="evidence" value="ECO:0007669"/>
    <property type="project" value="UniProtKB-KW"/>
</dbReference>
<dbReference type="GO" id="GO:0033353">
    <property type="term" value="P:S-adenosylmethionine cycle"/>
    <property type="evidence" value="ECO:0007669"/>
    <property type="project" value="TreeGrafter"/>
</dbReference>
<dbReference type="CDD" id="cd00401">
    <property type="entry name" value="SAHH"/>
    <property type="match status" value="1"/>
</dbReference>
<dbReference type="FunFam" id="3.40.50.720:FF:000004">
    <property type="entry name" value="Adenosylhomocysteinase"/>
    <property type="match status" value="1"/>
</dbReference>
<dbReference type="Gene3D" id="3.40.50.1480">
    <property type="entry name" value="Adenosylhomocysteinase-like"/>
    <property type="match status" value="1"/>
</dbReference>
<dbReference type="Gene3D" id="3.40.50.720">
    <property type="entry name" value="NAD(P)-binding Rossmann-like Domain"/>
    <property type="match status" value="1"/>
</dbReference>
<dbReference type="HAMAP" id="MF_00563">
    <property type="entry name" value="AdoHcyase"/>
    <property type="match status" value="1"/>
</dbReference>
<dbReference type="InterPro" id="IPR042172">
    <property type="entry name" value="Adenosylhomocyst_ase-like_sf"/>
</dbReference>
<dbReference type="InterPro" id="IPR000043">
    <property type="entry name" value="Adenosylhomocysteinase-like"/>
</dbReference>
<dbReference type="InterPro" id="IPR015878">
    <property type="entry name" value="Ado_hCys_hydrolase_NAD-bd"/>
</dbReference>
<dbReference type="InterPro" id="IPR036291">
    <property type="entry name" value="NAD(P)-bd_dom_sf"/>
</dbReference>
<dbReference type="InterPro" id="IPR020082">
    <property type="entry name" value="S-Ado-L-homoCys_hydrolase_CS"/>
</dbReference>
<dbReference type="NCBIfam" id="TIGR00936">
    <property type="entry name" value="ahcY"/>
    <property type="match status" value="1"/>
</dbReference>
<dbReference type="NCBIfam" id="NF004005">
    <property type="entry name" value="PRK05476.2-3"/>
    <property type="match status" value="1"/>
</dbReference>
<dbReference type="PANTHER" id="PTHR23420">
    <property type="entry name" value="ADENOSYLHOMOCYSTEINASE"/>
    <property type="match status" value="1"/>
</dbReference>
<dbReference type="PANTHER" id="PTHR23420:SF0">
    <property type="entry name" value="ADENOSYLHOMOCYSTEINASE"/>
    <property type="match status" value="1"/>
</dbReference>
<dbReference type="Pfam" id="PF05221">
    <property type="entry name" value="AdoHcyase"/>
    <property type="match status" value="1"/>
</dbReference>
<dbReference type="Pfam" id="PF00670">
    <property type="entry name" value="AdoHcyase_NAD"/>
    <property type="match status" value="1"/>
</dbReference>
<dbReference type="PIRSF" id="PIRSF001109">
    <property type="entry name" value="Ad_hcy_hydrolase"/>
    <property type="match status" value="1"/>
</dbReference>
<dbReference type="SMART" id="SM00996">
    <property type="entry name" value="AdoHcyase"/>
    <property type="match status" value="1"/>
</dbReference>
<dbReference type="SMART" id="SM00997">
    <property type="entry name" value="AdoHcyase_NAD"/>
    <property type="match status" value="1"/>
</dbReference>
<dbReference type="SUPFAM" id="SSF52283">
    <property type="entry name" value="Formate/glycerate dehydrogenase catalytic domain-like"/>
    <property type="match status" value="1"/>
</dbReference>
<dbReference type="SUPFAM" id="SSF51735">
    <property type="entry name" value="NAD(P)-binding Rossmann-fold domains"/>
    <property type="match status" value="1"/>
</dbReference>
<dbReference type="PROSITE" id="PS00738">
    <property type="entry name" value="ADOHCYASE_1"/>
    <property type="match status" value="1"/>
</dbReference>
<dbReference type="PROSITE" id="PS00739">
    <property type="entry name" value="ADOHCYASE_2"/>
    <property type="match status" value="1"/>
</dbReference>
<comment type="function">
    <text evidence="1">May play a key role in the regulation of the intracellular concentration of adenosylhomocysteine.</text>
</comment>
<comment type="catalytic activity">
    <reaction evidence="1">
        <text>S-adenosyl-L-homocysteine + H2O = L-homocysteine + adenosine</text>
        <dbReference type="Rhea" id="RHEA:21708"/>
        <dbReference type="ChEBI" id="CHEBI:15377"/>
        <dbReference type="ChEBI" id="CHEBI:16335"/>
        <dbReference type="ChEBI" id="CHEBI:57856"/>
        <dbReference type="ChEBI" id="CHEBI:58199"/>
        <dbReference type="EC" id="3.13.2.1"/>
    </reaction>
</comment>
<comment type="cofactor">
    <cofactor evidence="1">
        <name>NAD(+)</name>
        <dbReference type="ChEBI" id="CHEBI:57540"/>
    </cofactor>
    <text evidence="1">Binds 1 NAD(+) per subunit.</text>
</comment>
<comment type="pathway">
    <text evidence="1">Amino-acid biosynthesis; L-homocysteine biosynthesis; L-homocysteine from S-adenosyl-L-homocysteine: step 1/1.</text>
</comment>
<comment type="subcellular location">
    <subcellularLocation>
        <location evidence="1">Cytoplasm</location>
    </subcellularLocation>
</comment>
<comment type="similarity">
    <text evidence="1">Belongs to the adenosylhomocysteinase family.</text>
</comment>
<reference key="1">
    <citation type="journal article" date="2009" name="Environ. Microbiol.">
        <title>Contribution of mobile genetic elements to Desulfovibrio vulgaris genome plasticity.</title>
        <authorList>
            <person name="Walker C.B."/>
            <person name="Stolyar S."/>
            <person name="Chivian D."/>
            <person name="Pinel N."/>
            <person name="Gabster J.A."/>
            <person name="Dehal P.S."/>
            <person name="He Z."/>
            <person name="Yang Z.K."/>
            <person name="Yen H.C."/>
            <person name="Zhou J."/>
            <person name="Wall J.D."/>
            <person name="Hazen T.C."/>
            <person name="Arkin A.P."/>
            <person name="Stahl D.A."/>
        </authorList>
    </citation>
    <scope>NUCLEOTIDE SEQUENCE [LARGE SCALE GENOMIC DNA]</scope>
    <source>
        <strain>DP4</strain>
    </source>
</reference>
<protein>
    <recommendedName>
        <fullName evidence="1">Adenosylhomocysteinase</fullName>
        <ecNumber evidence="1">3.13.2.1</ecNumber>
    </recommendedName>
    <alternativeName>
        <fullName evidence="1">S-adenosyl-L-homocysteine hydrolase</fullName>
        <shortName evidence="1">AdoHcyase</shortName>
    </alternativeName>
</protein>
<feature type="chain" id="PRO_1000024725" description="Adenosylhomocysteinase">
    <location>
        <begin position="1"/>
        <end position="479"/>
    </location>
</feature>
<feature type="binding site" evidence="1">
    <location>
        <position position="66"/>
    </location>
    <ligand>
        <name>substrate</name>
    </ligand>
</feature>
<feature type="binding site" evidence="1">
    <location>
        <position position="142"/>
    </location>
    <ligand>
        <name>substrate</name>
    </ligand>
</feature>
<feature type="binding site" evidence="1">
    <location>
        <position position="203"/>
    </location>
    <ligand>
        <name>substrate</name>
    </ligand>
</feature>
<feature type="binding site" evidence="1">
    <location>
        <begin position="204"/>
        <end position="206"/>
    </location>
    <ligand>
        <name>NAD(+)</name>
        <dbReference type="ChEBI" id="CHEBI:57540"/>
    </ligand>
</feature>
<feature type="binding site" evidence="1">
    <location>
        <position position="233"/>
    </location>
    <ligand>
        <name>substrate</name>
    </ligand>
</feature>
<feature type="binding site" evidence="1">
    <location>
        <position position="237"/>
    </location>
    <ligand>
        <name>substrate</name>
    </ligand>
</feature>
<feature type="binding site" evidence="1">
    <location>
        <position position="238"/>
    </location>
    <ligand>
        <name>NAD(+)</name>
        <dbReference type="ChEBI" id="CHEBI:57540"/>
    </ligand>
</feature>
<feature type="binding site" evidence="1">
    <location>
        <begin position="267"/>
        <end position="272"/>
    </location>
    <ligand>
        <name>NAD(+)</name>
        <dbReference type="ChEBI" id="CHEBI:57540"/>
    </ligand>
</feature>
<feature type="binding site" evidence="1">
    <location>
        <position position="290"/>
    </location>
    <ligand>
        <name>NAD(+)</name>
        <dbReference type="ChEBI" id="CHEBI:57540"/>
    </ligand>
</feature>
<feature type="binding site" evidence="1">
    <location>
        <position position="325"/>
    </location>
    <ligand>
        <name>NAD(+)</name>
        <dbReference type="ChEBI" id="CHEBI:57540"/>
    </ligand>
</feature>
<feature type="binding site" evidence="1">
    <location>
        <begin position="346"/>
        <end position="348"/>
    </location>
    <ligand>
        <name>NAD(+)</name>
        <dbReference type="ChEBI" id="CHEBI:57540"/>
    </ligand>
</feature>
<feature type="binding site" evidence="1">
    <location>
        <position position="394"/>
    </location>
    <ligand>
        <name>NAD(+)</name>
        <dbReference type="ChEBI" id="CHEBI:57540"/>
    </ligand>
</feature>
<name>SAHH_NITV4</name>
<accession>A1VFZ7</accession>
<gene>
    <name evidence="1" type="primary">ahcY</name>
    <name type="ordered locus">Dvul_2347</name>
</gene>